<keyword id="KW-0143">Chaperone</keyword>
<keyword id="KW-0963">Cytoplasm</keyword>
<keyword id="KW-1015">Disulfide bond</keyword>
<keyword id="KW-0676">Redox-active center</keyword>
<keyword id="KW-1185">Reference proteome</keyword>
<keyword id="KW-0862">Zinc</keyword>
<accession>P64402</accession>
<accession>Q8DXM6</accession>
<accession>Q8E396</accession>
<gene>
    <name evidence="1" type="primary">hslO</name>
    <name type="ordered locus">SAG1824</name>
</gene>
<organism>
    <name type="scientific">Streptococcus agalactiae serotype V (strain ATCC BAA-611 / 2603 V/R)</name>
    <dbReference type="NCBI Taxonomy" id="208435"/>
    <lineage>
        <taxon>Bacteria</taxon>
        <taxon>Bacillati</taxon>
        <taxon>Bacillota</taxon>
        <taxon>Bacilli</taxon>
        <taxon>Lactobacillales</taxon>
        <taxon>Streptococcaceae</taxon>
        <taxon>Streptococcus</taxon>
    </lineage>
</organism>
<protein>
    <recommendedName>
        <fullName evidence="1">33 kDa chaperonin</fullName>
    </recommendedName>
    <alternativeName>
        <fullName evidence="1">Heat shock protein 33 homolog</fullName>
        <shortName evidence="1">HSP33</shortName>
    </alternativeName>
</protein>
<feature type="chain" id="PRO_0000192208" description="33 kDa chaperonin">
    <location>
        <begin position="1"/>
        <end position="291"/>
    </location>
</feature>
<feature type="disulfide bond" description="Redox-active" evidence="1">
    <location>
        <begin position="235"/>
        <end position="237"/>
    </location>
</feature>
<feature type="disulfide bond" description="Redox-active" evidence="1">
    <location>
        <begin position="268"/>
        <end position="271"/>
    </location>
</feature>
<sequence length="291" mass="31916">MDKIIKSISTSGSFRAYVLDCTETVRTAQEKHQTLSSSTVALGRTLIANQILAANQKGNSKVTVKVIGDSSFGHIISVADTKGNVKGYIQNTGVDIKKTATGEVLVGPFMGNGHFVVITDYATGQPYTSTTPLITGEIGEDFAYYLTESEQTPSAVGLNVLLDDEDKVKVAGGFMLQVLPGASDEEISRYEKRIQEMPSISSLLESENHIESLLSAIYGEDDYKRLSEDSLAFYCDCSKERFEAALLTLGTKELQAMKDEDKGVEITCQFCNQTYYFTEEDLEKIINDSIK</sequence>
<comment type="function">
    <text evidence="1">Redox regulated molecular chaperone. Protects both thermally unfolding and oxidatively damaged proteins from irreversible aggregation. Plays an important role in the bacterial defense system toward oxidative stress.</text>
</comment>
<comment type="subcellular location">
    <subcellularLocation>
        <location evidence="1">Cytoplasm</location>
    </subcellularLocation>
</comment>
<comment type="PTM">
    <text evidence="1">Under oxidizing conditions two disulfide bonds are formed involving the reactive cysteines. Under reducing conditions zinc is bound to the reactive cysteines and the protein is inactive.</text>
</comment>
<comment type="similarity">
    <text evidence="1">Belongs to the HSP33 family.</text>
</comment>
<proteinExistence type="inferred from homology"/>
<name>HSLO_STRA5</name>
<evidence type="ECO:0000255" key="1">
    <source>
        <dbReference type="HAMAP-Rule" id="MF_00117"/>
    </source>
</evidence>
<dbReference type="EMBL" id="AE009948">
    <property type="protein sequence ID" value="AAN00687.1"/>
    <property type="molecule type" value="Genomic_DNA"/>
</dbReference>
<dbReference type="RefSeq" id="NP_688814.1">
    <property type="nucleotide sequence ID" value="NC_004116.1"/>
</dbReference>
<dbReference type="RefSeq" id="WP_000357824.1">
    <property type="nucleotide sequence ID" value="NC_004116.1"/>
</dbReference>
<dbReference type="SMR" id="P64402"/>
<dbReference type="STRING" id="208435.SAG1824"/>
<dbReference type="KEGG" id="sag:SAG1824"/>
<dbReference type="PATRIC" id="fig|208435.3.peg.1832"/>
<dbReference type="HOGENOM" id="CLU_054493_1_0_9"/>
<dbReference type="OrthoDB" id="9776534at2"/>
<dbReference type="Proteomes" id="UP000000821">
    <property type="component" value="Chromosome"/>
</dbReference>
<dbReference type="GO" id="GO:0005737">
    <property type="term" value="C:cytoplasm"/>
    <property type="evidence" value="ECO:0007669"/>
    <property type="project" value="UniProtKB-SubCell"/>
</dbReference>
<dbReference type="GO" id="GO:0044183">
    <property type="term" value="F:protein folding chaperone"/>
    <property type="evidence" value="ECO:0007669"/>
    <property type="project" value="TreeGrafter"/>
</dbReference>
<dbReference type="GO" id="GO:0051082">
    <property type="term" value="F:unfolded protein binding"/>
    <property type="evidence" value="ECO:0007669"/>
    <property type="project" value="UniProtKB-UniRule"/>
</dbReference>
<dbReference type="GO" id="GO:0042026">
    <property type="term" value="P:protein refolding"/>
    <property type="evidence" value="ECO:0007669"/>
    <property type="project" value="TreeGrafter"/>
</dbReference>
<dbReference type="CDD" id="cd00498">
    <property type="entry name" value="Hsp33"/>
    <property type="match status" value="1"/>
</dbReference>
<dbReference type="Gene3D" id="3.55.30.10">
    <property type="entry name" value="Hsp33 domain"/>
    <property type="match status" value="1"/>
</dbReference>
<dbReference type="Gene3D" id="3.90.1280.10">
    <property type="entry name" value="HSP33 redox switch-like"/>
    <property type="match status" value="1"/>
</dbReference>
<dbReference type="HAMAP" id="MF_00117">
    <property type="entry name" value="HslO"/>
    <property type="match status" value="1"/>
</dbReference>
<dbReference type="InterPro" id="IPR000397">
    <property type="entry name" value="Heat_shock_Hsp33"/>
</dbReference>
<dbReference type="InterPro" id="IPR016154">
    <property type="entry name" value="Heat_shock_Hsp33_C"/>
</dbReference>
<dbReference type="InterPro" id="IPR016153">
    <property type="entry name" value="Heat_shock_Hsp33_N"/>
</dbReference>
<dbReference type="NCBIfam" id="NF001033">
    <property type="entry name" value="PRK00114.1"/>
    <property type="match status" value="1"/>
</dbReference>
<dbReference type="PANTHER" id="PTHR30111">
    <property type="entry name" value="33 KDA CHAPERONIN"/>
    <property type="match status" value="1"/>
</dbReference>
<dbReference type="PANTHER" id="PTHR30111:SF1">
    <property type="entry name" value="33 KDA CHAPERONIN"/>
    <property type="match status" value="1"/>
</dbReference>
<dbReference type="Pfam" id="PF01430">
    <property type="entry name" value="HSP33"/>
    <property type="match status" value="1"/>
</dbReference>
<dbReference type="PIRSF" id="PIRSF005261">
    <property type="entry name" value="Heat_shock_Hsp33"/>
    <property type="match status" value="1"/>
</dbReference>
<dbReference type="SUPFAM" id="SSF64397">
    <property type="entry name" value="Hsp33 domain"/>
    <property type="match status" value="1"/>
</dbReference>
<dbReference type="SUPFAM" id="SSF118352">
    <property type="entry name" value="HSP33 redox switch-like"/>
    <property type="match status" value="1"/>
</dbReference>
<reference key="1">
    <citation type="journal article" date="2002" name="Proc. Natl. Acad. Sci. U.S.A.">
        <title>Complete genome sequence and comparative genomic analysis of an emerging human pathogen, serotype V Streptococcus agalactiae.</title>
        <authorList>
            <person name="Tettelin H."/>
            <person name="Masignani V."/>
            <person name="Cieslewicz M.J."/>
            <person name="Eisen J.A."/>
            <person name="Peterson S.N."/>
            <person name="Wessels M.R."/>
            <person name="Paulsen I.T."/>
            <person name="Nelson K.E."/>
            <person name="Margarit I."/>
            <person name="Read T.D."/>
            <person name="Madoff L.C."/>
            <person name="Wolf A.M."/>
            <person name="Beanan M.J."/>
            <person name="Brinkac L.M."/>
            <person name="Daugherty S.C."/>
            <person name="DeBoy R.T."/>
            <person name="Durkin A.S."/>
            <person name="Kolonay J.F."/>
            <person name="Madupu R."/>
            <person name="Lewis M.R."/>
            <person name="Radune D."/>
            <person name="Fedorova N.B."/>
            <person name="Scanlan D."/>
            <person name="Khouri H.M."/>
            <person name="Mulligan S."/>
            <person name="Carty H.A."/>
            <person name="Cline R.T."/>
            <person name="Van Aken S.E."/>
            <person name="Gill J."/>
            <person name="Scarselli M."/>
            <person name="Mora M."/>
            <person name="Iacobini E.T."/>
            <person name="Brettoni C."/>
            <person name="Galli G."/>
            <person name="Mariani M."/>
            <person name="Vegni F."/>
            <person name="Maione D."/>
            <person name="Rinaudo D."/>
            <person name="Rappuoli R."/>
            <person name="Telford J.L."/>
            <person name="Kasper D.L."/>
            <person name="Grandi G."/>
            <person name="Fraser C.M."/>
        </authorList>
    </citation>
    <scope>NUCLEOTIDE SEQUENCE [LARGE SCALE GENOMIC DNA]</scope>
    <source>
        <strain>ATCC BAA-611 / 2603 V/R</strain>
    </source>
</reference>